<sequence>MSVLLFGVSHRSAPVSVLEQLSIDESDHGKIVDRVLQSPLVTEAMVLSTCNRVEVYAVVDAFHGGLAVIGQVLSDHSGMSMSDLTKYAYVRYSEAAVEHLFAVASGLDSAVIGEQQVLGQVRRAYATAETNRTVGRVLHELAQRALSVGKRVHSETAIDAAGASVVSVALDMADRRLGGLAGKTAVLVGAGAMGALAAAHLSRAGIGQVHVLNRSLSRAQRLVRKIRETGVRADALPLEHLADALAGADVVVSCTGAVSPVVSLADVHHALAAAGRSAADETAHPLVICDLGMPRDVDPAVAGLPGVWVVDVDRVQHEPSAHAAAADVDAARTIVATEVAAYLAGQRMAEVTPTVTALRQRAADVVEAELLRLDNRLPGLDSAHREEVARTVRRVVDKLLHAPTVRIKQLASAPGGDSYAEALRELFELDQTAVDAVAAGELPVIATGFDAGAPQQPTE</sequence>
<name>HEM1_MYCPA</name>
<organism>
    <name type="scientific">Mycolicibacterium paratuberculosis (strain ATCC BAA-968 / K-10)</name>
    <name type="common">Mycobacterium paratuberculosis</name>
    <dbReference type="NCBI Taxonomy" id="262316"/>
    <lineage>
        <taxon>Bacteria</taxon>
        <taxon>Bacillati</taxon>
        <taxon>Actinomycetota</taxon>
        <taxon>Actinomycetes</taxon>
        <taxon>Mycobacteriales</taxon>
        <taxon>Mycobacteriaceae</taxon>
        <taxon>Mycobacterium</taxon>
        <taxon>Mycobacterium avium complex (MAC)</taxon>
    </lineage>
</organism>
<accession>Q73SS1</accession>
<evidence type="ECO:0000255" key="1">
    <source>
        <dbReference type="HAMAP-Rule" id="MF_00087"/>
    </source>
</evidence>
<gene>
    <name evidence="1" type="primary">hemA</name>
    <name type="ordered locus">MAP_4002</name>
</gene>
<feature type="chain" id="PRO_0000114041" description="Glutamyl-tRNA reductase">
    <location>
        <begin position="1"/>
        <end position="459"/>
    </location>
</feature>
<feature type="active site" description="Nucleophile" evidence="1">
    <location>
        <position position="50"/>
    </location>
</feature>
<feature type="binding site" evidence="1">
    <location>
        <begin position="49"/>
        <end position="52"/>
    </location>
    <ligand>
        <name>substrate</name>
    </ligand>
</feature>
<feature type="binding site" evidence="1">
    <location>
        <position position="109"/>
    </location>
    <ligand>
        <name>substrate</name>
    </ligand>
</feature>
<feature type="binding site" evidence="1">
    <location>
        <begin position="114"/>
        <end position="116"/>
    </location>
    <ligand>
        <name>substrate</name>
    </ligand>
</feature>
<feature type="binding site" evidence="1">
    <location>
        <position position="120"/>
    </location>
    <ligand>
        <name>substrate</name>
    </ligand>
</feature>
<feature type="binding site" evidence="1">
    <location>
        <begin position="189"/>
        <end position="194"/>
    </location>
    <ligand>
        <name>NADP(+)</name>
        <dbReference type="ChEBI" id="CHEBI:58349"/>
    </ligand>
</feature>
<feature type="site" description="Important for activity" evidence="1">
    <location>
        <position position="99"/>
    </location>
</feature>
<keyword id="KW-0521">NADP</keyword>
<keyword id="KW-0560">Oxidoreductase</keyword>
<keyword id="KW-0627">Porphyrin biosynthesis</keyword>
<keyword id="KW-1185">Reference proteome</keyword>
<dbReference type="EC" id="1.2.1.70" evidence="1"/>
<dbReference type="EMBL" id="AE016958">
    <property type="protein sequence ID" value="AAS06552.1"/>
    <property type="molecule type" value="Genomic_DNA"/>
</dbReference>
<dbReference type="RefSeq" id="WP_003879324.1">
    <property type="nucleotide sequence ID" value="NZ_CP106873.1"/>
</dbReference>
<dbReference type="SMR" id="Q73SS1"/>
<dbReference type="STRING" id="262316.MAP_4002"/>
<dbReference type="KEGG" id="mpa:MAP_4002"/>
<dbReference type="eggNOG" id="COG0373">
    <property type="taxonomic scope" value="Bacteria"/>
</dbReference>
<dbReference type="HOGENOM" id="CLU_035113_2_2_11"/>
<dbReference type="UniPathway" id="UPA00251">
    <property type="reaction ID" value="UER00316"/>
</dbReference>
<dbReference type="Proteomes" id="UP000000580">
    <property type="component" value="Chromosome"/>
</dbReference>
<dbReference type="GO" id="GO:0008883">
    <property type="term" value="F:glutamyl-tRNA reductase activity"/>
    <property type="evidence" value="ECO:0007669"/>
    <property type="project" value="UniProtKB-UniRule"/>
</dbReference>
<dbReference type="GO" id="GO:0050661">
    <property type="term" value="F:NADP binding"/>
    <property type="evidence" value="ECO:0007669"/>
    <property type="project" value="InterPro"/>
</dbReference>
<dbReference type="GO" id="GO:0019353">
    <property type="term" value="P:protoporphyrinogen IX biosynthetic process from glutamate"/>
    <property type="evidence" value="ECO:0007669"/>
    <property type="project" value="TreeGrafter"/>
</dbReference>
<dbReference type="CDD" id="cd05213">
    <property type="entry name" value="NAD_bind_Glutamyl_tRNA_reduct"/>
    <property type="match status" value="1"/>
</dbReference>
<dbReference type="FunFam" id="3.30.460.30:FF:000001">
    <property type="entry name" value="Glutamyl-tRNA reductase"/>
    <property type="match status" value="1"/>
</dbReference>
<dbReference type="Gene3D" id="3.30.460.30">
    <property type="entry name" value="Glutamyl-tRNA reductase, N-terminal domain"/>
    <property type="match status" value="1"/>
</dbReference>
<dbReference type="Gene3D" id="3.40.50.720">
    <property type="entry name" value="NAD(P)-binding Rossmann-like Domain"/>
    <property type="match status" value="1"/>
</dbReference>
<dbReference type="HAMAP" id="MF_00087">
    <property type="entry name" value="Glu_tRNA_reductase"/>
    <property type="match status" value="1"/>
</dbReference>
<dbReference type="InterPro" id="IPR000343">
    <property type="entry name" value="4pyrrol_synth_GluRdtase"/>
</dbReference>
<dbReference type="InterPro" id="IPR015896">
    <property type="entry name" value="4pyrrol_synth_GluRdtase_dimer"/>
</dbReference>
<dbReference type="InterPro" id="IPR015895">
    <property type="entry name" value="4pyrrol_synth_GluRdtase_N"/>
</dbReference>
<dbReference type="InterPro" id="IPR018214">
    <property type="entry name" value="GluRdtase_CS"/>
</dbReference>
<dbReference type="InterPro" id="IPR036453">
    <property type="entry name" value="GluRdtase_dimer_dom_sf"/>
</dbReference>
<dbReference type="InterPro" id="IPR036343">
    <property type="entry name" value="GluRdtase_N_sf"/>
</dbReference>
<dbReference type="InterPro" id="IPR036291">
    <property type="entry name" value="NAD(P)-bd_dom_sf"/>
</dbReference>
<dbReference type="InterPro" id="IPR006151">
    <property type="entry name" value="Shikm_DH/Glu-tRNA_Rdtase"/>
</dbReference>
<dbReference type="NCBIfam" id="TIGR01035">
    <property type="entry name" value="hemA"/>
    <property type="match status" value="1"/>
</dbReference>
<dbReference type="NCBIfam" id="NF000744">
    <property type="entry name" value="PRK00045.1-3"/>
    <property type="match status" value="1"/>
</dbReference>
<dbReference type="PANTHER" id="PTHR43013">
    <property type="entry name" value="GLUTAMYL-TRNA REDUCTASE"/>
    <property type="match status" value="1"/>
</dbReference>
<dbReference type="PANTHER" id="PTHR43013:SF1">
    <property type="entry name" value="GLUTAMYL-TRNA REDUCTASE"/>
    <property type="match status" value="1"/>
</dbReference>
<dbReference type="Pfam" id="PF00745">
    <property type="entry name" value="GlutR_dimer"/>
    <property type="match status" value="1"/>
</dbReference>
<dbReference type="Pfam" id="PF05201">
    <property type="entry name" value="GlutR_N"/>
    <property type="match status" value="1"/>
</dbReference>
<dbReference type="Pfam" id="PF01488">
    <property type="entry name" value="Shikimate_DH"/>
    <property type="match status" value="1"/>
</dbReference>
<dbReference type="PIRSF" id="PIRSF000445">
    <property type="entry name" value="4pyrrol_synth_GluRdtase"/>
    <property type="match status" value="1"/>
</dbReference>
<dbReference type="SUPFAM" id="SSF69742">
    <property type="entry name" value="Glutamyl tRNA-reductase catalytic, N-terminal domain"/>
    <property type="match status" value="1"/>
</dbReference>
<dbReference type="SUPFAM" id="SSF69075">
    <property type="entry name" value="Glutamyl tRNA-reductase dimerization domain"/>
    <property type="match status" value="1"/>
</dbReference>
<dbReference type="SUPFAM" id="SSF51735">
    <property type="entry name" value="NAD(P)-binding Rossmann-fold domains"/>
    <property type="match status" value="1"/>
</dbReference>
<dbReference type="PROSITE" id="PS00747">
    <property type="entry name" value="GLUTR"/>
    <property type="match status" value="1"/>
</dbReference>
<reference key="1">
    <citation type="journal article" date="2005" name="Proc. Natl. Acad. Sci. U.S.A.">
        <title>The complete genome sequence of Mycobacterium avium subspecies paratuberculosis.</title>
        <authorList>
            <person name="Li L."/>
            <person name="Bannantine J.P."/>
            <person name="Zhang Q."/>
            <person name="Amonsin A."/>
            <person name="May B.J."/>
            <person name="Alt D."/>
            <person name="Banerji N."/>
            <person name="Kanjilal S."/>
            <person name="Kapur V."/>
        </authorList>
    </citation>
    <scope>NUCLEOTIDE SEQUENCE [LARGE SCALE GENOMIC DNA]</scope>
    <source>
        <strain>ATCC BAA-968 / K-10</strain>
    </source>
</reference>
<protein>
    <recommendedName>
        <fullName evidence="1">Glutamyl-tRNA reductase</fullName>
        <shortName evidence="1">GluTR</shortName>
        <ecNumber evidence="1">1.2.1.70</ecNumber>
    </recommendedName>
</protein>
<comment type="function">
    <text evidence="1">Catalyzes the NADPH-dependent reduction of glutamyl-tRNA(Glu) to glutamate 1-semialdehyde (GSA).</text>
</comment>
<comment type="catalytic activity">
    <reaction evidence="1">
        <text>(S)-4-amino-5-oxopentanoate + tRNA(Glu) + NADP(+) = L-glutamyl-tRNA(Glu) + NADPH + H(+)</text>
        <dbReference type="Rhea" id="RHEA:12344"/>
        <dbReference type="Rhea" id="RHEA-COMP:9663"/>
        <dbReference type="Rhea" id="RHEA-COMP:9680"/>
        <dbReference type="ChEBI" id="CHEBI:15378"/>
        <dbReference type="ChEBI" id="CHEBI:57501"/>
        <dbReference type="ChEBI" id="CHEBI:57783"/>
        <dbReference type="ChEBI" id="CHEBI:58349"/>
        <dbReference type="ChEBI" id="CHEBI:78442"/>
        <dbReference type="ChEBI" id="CHEBI:78520"/>
        <dbReference type="EC" id="1.2.1.70"/>
    </reaction>
</comment>
<comment type="pathway">
    <text evidence="1">Porphyrin-containing compound metabolism; protoporphyrin-IX biosynthesis; 5-aminolevulinate from L-glutamyl-tRNA(Glu): step 1/2.</text>
</comment>
<comment type="subunit">
    <text evidence="1">Homodimer.</text>
</comment>
<comment type="domain">
    <text evidence="1">Possesses an unusual extended V-shaped dimeric structure with each monomer consisting of three distinct domains arranged along a curved 'spinal' alpha-helix. The N-terminal catalytic domain specifically recognizes the glutamate moiety of the substrate. The second domain is the NADPH-binding domain, and the third C-terminal domain is responsible for dimerization.</text>
</comment>
<comment type="miscellaneous">
    <text evidence="1">During catalysis, the active site Cys acts as a nucleophile attacking the alpha-carbonyl group of tRNA-bound glutamate with the formation of a thioester intermediate between enzyme and glutamate, and the concomitant release of tRNA(Glu). The thioester intermediate is finally reduced by direct hydride transfer from NADPH, to form the product GSA.</text>
</comment>
<comment type="similarity">
    <text evidence="1">Belongs to the glutamyl-tRNA reductase family.</text>
</comment>
<proteinExistence type="inferred from homology"/>